<gene>
    <name evidence="13" type="primary">shr</name>
    <name evidence="17" type="ordered locus">SPy_1798</name>
</gene>
<evidence type="ECO:0000255" key="1"/>
<evidence type="ECO:0000255" key="2">
    <source>
        <dbReference type="PROSITE-ProRule" id="PRU00337"/>
    </source>
</evidence>
<evidence type="ECO:0000256" key="3">
    <source>
        <dbReference type="SAM" id="MobiDB-lite"/>
    </source>
</evidence>
<evidence type="ECO:0000269" key="4">
    <source>
    </source>
</evidence>
<evidence type="ECO:0000269" key="5">
    <source>
    </source>
</evidence>
<evidence type="ECO:0000269" key="6">
    <source>
    </source>
</evidence>
<evidence type="ECO:0000269" key="7">
    <source>
    </source>
</evidence>
<evidence type="ECO:0000269" key="8">
    <source>
    </source>
</evidence>
<evidence type="ECO:0000269" key="9">
    <source>
    </source>
</evidence>
<evidence type="ECO:0000269" key="10">
    <source>
    </source>
</evidence>
<evidence type="ECO:0000269" key="11">
    <source>
    </source>
</evidence>
<evidence type="ECO:0000269" key="12">
    <source>
    </source>
</evidence>
<evidence type="ECO:0000303" key="13">
    <source>
    </source>
</evidence>
<evidence type="ECO:0000303" key="14">
    <source>
    </source>
</evidence>
<evidence type="ECO:0000305" key="15">
    <source>
    </source>
</evidence>
<evidence type="ECO:0000305" key="16">
    <source>
    </source>
</evidence>
<evidence type="ECO:0000312" key="17">
    <source>
        <dbReference type="EMBL" id="AAK34530.1"/>
    </source>
</evidence>
<evidence type="ECO:0000312" key="18">
    <source>
        <dbReference type="EMBL" id="ABW80932.1"/>
    </source>
</evidence>
<evidence type="ECO:0007744" key="19">
    <source>
        <dbReference type="PDB" id="6DKQ"/>
    </source>
</evidence>
<evidence type="ECO:0007744" key="20">
    <source>
        <dbReference type="PDB" id="7CUD"/>
    </source>
</evidence>
<evidence type="ECO:0007744" key="21">
    <source>
        <dbReference type="PDB" id="7CUE"/>
    </source>
</evidence>
<evidence type="ECO:0007744" key="22">
    <source>
        <dbReference type="PDB" id="8DOV"/>
    </source>
</evidence>
<evidence type="ECO:0007829" key="23">
    <source>
        <dbReference type="PDB" id="6DKQ"/>
    </source>
</evidence>
<comment type="function">
    <text evidence="4 5 7 8 9 10 11">Hemoprotein receptor that plays a central role in the acquisition of host heme, a source of iron during bacterial infection, and is therefore an important virulence factor (PubMed:12595414, PubMed:20807204, PubMed:23076332, PubMed:23993953, PubMed:36693107). Captures host hemoproteins and their iron-containing heme molecules, and transfers the heme to the cell surface heme-binding protein Shp (PubMed:18215300, PubMed:23993953). Plays a pivotal role in iron acquisition and growth under iron-starvation conditions (PubMed:23076332). Uses a cap and release mechanism in which Shr forms a dynamic complex with hemoglobin that enables the gated release of its most labile heme molecule (PubMed:36693107). This mechanism exploits the hemoglobin beta subunit's inherent weaker affinity for heme, allowing S.pyogenes to preferentially capture only heme-saturated forms of hemoglobin that contain iron (PubMed:36693107). In vitro, binds directly to a variety of heme-containing proteins, including hemoglobin, myoglobin, heme albumin and the hemoglobin-haptoglobin complex (PubMed:12595414, PubMed:30301765). It also binds to and acquires heme from methemoglobin, the ferric form of hemoglobin, which is likely to be a physiologically relevant heme source for the hemolytic group A streptococcus (GAS) (PubMed:20807204, PubMed:36693107). Seems to have an inherent ability to reduce the ferric heme present in methemoglobin to ferrous heme and to provide a stable environment for the produced ferrous complex (PubMed:20807204). Does not bind apohemoglobin, apohaptoglobin, fibrinogen or streptavidin, indicating that it specifically recognizes hemoproteins (PubMed:12595414, PubMed:20807204).</text>
</comment>
<comment type="function">
    <text evidence="6 7">In addition to its role in heme acquisition, functions as an adhesin, contributing to host cell adhesion and hence virulence (PubMed:18710861). Specifically binds to extracellular matrix (ECM) components, including fibronectin and laminin, and mediates bacterial attachment to host epithelial cells (PubMed:18710861, PubMed:20807204).</text>
</comment>
<comment type="activity regulation">
    <text evidence="9">May modulate heme uptake according to heme availability (PubMed:23993953). In the presence of high heme concentrations, NEAT 1 facilitates fast heme delivery to Shp, whereas NEAT 2 serves as a temporary storage for heme on the bacterial surface (PubMed:23993953). When heme availability is limiting, heme from NEAT 2 is transferred back to NEAT 1 and from there to Shp (PubMed:23993953).</text>
</comment>
<comment type="subcellular location">
    <subcellularLocation>
        <location evidence="6 15">Cell membrane</location>
        <topology evidence="1">Single-pass membrane protein</topology>
        <orientation evidence="4 6">Extracellular side</orientation>
    </subcellularLocation>
    <text evidence="6">Remains associated with the cytoplasmic membrane after its export to the surface due to the transmembrane segment (PubMed:18710861). Is exposed on the bacterial cell surface and accessible for interactions with the host extracellular environment (PubMed:18710861).</text>
</comment>
<comment type="induction">
    <text evidence="4 6">Part of the highly conserved sia operon, which is involved in iron acquisition and induced by iron restriction (PubMed:12595414). A single infection event is found to be sufficient to trigger a significant antibody response to Shr in convalescent mice, indicating that Shr is expressed in vivo in an adequate amount and an adequate duration to elicit a host response (PubMed:18710861).</text>
</comment>
<comment type="domain">
    <text evidence="7 9 10 11 12">Contains two structurally unique N-terminal hemoglobin-interacting domains (HID 1 and HID 2), which are joined via a structured linker domain to a C-terminal region that contains two heme-binding NEAr Transporter domains (NEAT 1 and NEAT 2), separated by a series of leucine-rich repeats (LRR) (PubMed:20807204, PubMed:36693107). The N-terminal domain mediates binding to hemoglobin (PubMed:20807204, PubMed:30301765, PubMed:36693107, PubMed:38438508). It contains two hemoglobin-interacting domains, HID 1 and HID 2, which are autonomously folded and independently bind hemoglobin (PubMed:30301765, PubMed:36693107, PubMed:38438508). The linker domain may position NEAT 1 near hemoglobin for heme capture (PubMed:30301765). The N-terminal region and the NEAT 1 domain are sufficient for heme acquisition from methaemoglobin (PubMed:20807204). Both NEAT domains bind heme (PubMed:20807204, PubMed:23993953). Only NEAT 1 is capable to actively donate heme to Shp (PubMed:23993953). NEAT 1 can also transfer heme to apo-NEAT 2, by a fast and reversible process (PubMed:23993953). The NEAT 2 domain mediates most of the binding to the extracellular matrix components (PubMed:20807204).</text>
</comment>
<comment type="disruption phenotype">
    <text evidence="4 6 7 8">Growth of the null mutant and to a lesser extent that of the mutant that is missing both of the NEAT domains is impaired when hemoglobin is the sole source of iron (PubMed:20807204). Mutant from serotype M1T1 exhibits a growth defect in iron-restricted medium supplemented with ferric chloride (PubMed:23076332). Inactivation of the gene results in a 40% reduction in the attachment to human epithelial cells in comparison to the parent strain in serotype M49 (PubMed:18710861). In serotype M1T1, the mutant displays a reduction in human blood proliferation and laminin-binding capacity, and is attenuated for virulence in skin and systemic in vivo models of infection (PubMed:23076332). The mutant is attenuated for virulence in an intramuscular zebrafish model system (PubMed:18710861). Disruption of the sia operon in strain SF370 does not affect growth rate, but the mutant shows reduced hemoglobin binding and is more resistant to streptonigrin and hydrogen peroxide, suggesting decreased iron uptake (PubMed:12595414).</text>
</comment>
<comment type="biotechnology">
    <text evidence="12">Given that Shr is pathogenically important and that the protein-protein interaction between HID 2 and host hemoglobin is the first step of iron-acquiring process by Shr, small molecules or antibodies that bind at the binding interface could act as candidate antimicrobial agents and inhibit this important nutritional pathway.</text>
</comment>
<feature type="signal peptide" evidence="1">
    <location>
        <begin position="1"/>
        <end position="26"/>
    </location>
</feature>
<feature type="chain" id="PRO_0000461892" description="Streptococcal hemoprotein receptor">
    <location>
        <begin position="27"/>
        <end position="1275"/>
    </location>
</feature>
<feature type="transmembrane region" description="Helical" evidence="1">
    <location>
        <begin position="1250"/>
        <end position="1269"/>
    </location>
</feature>
<feature type="domain" description="NEAT 1" evidence="2">
    <location>
        <begin position="369"/>
        <end position="501"/>
    </location>
</feature>
<feature type="repeat" description="LRR 1" evidence="1">
    <location>
        <begin position="544"/>
        <end position="567"/>
    </location>
</feature>
<feature type="repeat" description="LRR 2" evidence="1">
    <location>
        <begin position="568"/>
        <end position="590"/>
    </location>
</feature>
<feature type="repeat" description="LRR 3" evidence="1">
    <location>
        <begin position="592"/>
        <end position="614"/>
    </location>
</feature>
<feature type="repeat" description="LRR 4" evidence="1">
    <location>
        <begin position="616"/>
        <end position="638"/>
    </location>
</feature>
<feature type="repeat" description="LRR 5" evidence="1">
    <location>
        <begin position="639"/>
        <end position="662"/>
    </location>
</feature>
<feature type="repeat" description="LRR 6" evidence="1">
    <location>
        <begin position="664"/>
        <end position="686"/>
    </location>
</feature>
<feature type="repeat" description="LRR 7" evidence="1">
    <location>
        <begin position="687"/>
        <end position="710"/>
    </location>
</feature>
<feature type="repeat" description="LRR 8" evidence="1">
    <location>
        <begin position="712"/>
        <end position="733"/>
    </location>
</feature>
<feature type="repeat" description="LRR 9" evidence="1">
    <location>
        <begin position="734"/>
        <end position="757"/>
    </location>
</feature>
<feature type="repeat" description="LRR 10" evidence="1">
    <location>
        <begin position="759"/>
        <end position="781"/>
    </location>
</feature>
<feature type="repeat" description="LRR 11" evidence="1">
    <location>
        <begin position="783"/>
        <end position="804"/>
    </location>
</feature>
<feature type="domain" description="NEAT 2" evidence="2">
    <location>
        <begin position="976"/>
        <end position="1138"/>
    </location>
</feature>
<feature type="region of interest" description="HID 1" evidence="16">
    <location>
        <begin position="61"/>
        <end position="123"/>
    </location>
</feature>
<feature type="region of interest" description="HID 2" evidence="16">
    <location>
        <begin position="203"/>
        <end position="269"/>
    </location>
</feature>
<feature type="region of interest" description="Disordered" evidence="3">
    <location>
        <begin position="1137"/>
        <end position="1174"/>
    </location>
</feature>
<feature type="region of interest" description="Disordered" evidence="3">
    <location>
        <begin position="1186"/>
        <end position="1205"/>
    </location>
</feature>
<feature type="region of interest" description="Disordered" evidence="3">
    <location>
        <begin position="1210"/>
        <end position="1248"/>
    </location>
</feature>
<feature type="compositionally biased region" description="Polar residues" evidence="3">
    <location>
        <begin position="1138"/>
        <end position="1166"/>
    </location>
</feature>
<feature type="compositionally biased region" description="Basic and acidic residues" evidence="3">
    <location>
        <begin position="1196"/>
        <end position="1205"/>
    </location>
</feature>
<feature type="compositionally biased region" description="Basic and acidic residues" evidence="3">
    <location>
        <begin position="1210"/>
        <end position="1229"/>
    </location>
</feature>
<feature type="binding site" description="axial binding residue" evidence="11 12 21 22">
    <location>
        <position position="87"/>
    </location>
    <ligand>
        <name>heme</name>
        <dbReference type="ChEBI" id="CHEBI:30413"/>
    </ligand>
    <ligandPart>
        <name>Fe</name>
        <dbReference type="ChEBI" id="CHEBI:18248"/>
    </ligandPart>
</feature>
<feature type="binding site" evidence="11 12 21 22">
    <location>
        <position position="196"/>
    </location>
    <ligand>
        <name>heme</name>
        <dbReference type="ChEBI" id="CHEBI:30413"/>
    </ligand>
</feature>
<feature type="binding site" evidence="11 12 21 22">
    <location>
        <position position="197"/>
    </location>
    <ligand>
        <name>heme</name>
        <dbReference type="ChEBI" id="CHEBI:30413"/>
    </ligand>
</feature>
<feature type="binding site" evidence="11 12 21 22">
    <location>
        <position position="238"/>
    </location>
    <ligand>
        <name>heme</name>
        <dbReference type="ChEBI" id="CHEBI:30413"/>
    </ligand>
</feature>
<feature type="mutagenesis site" description="Disrupts hemoglobin binding." evidence="10">
    <original>Y</original>
    <variation>A</variation>
    <location>
        <position position="55"/>
    </location>
</feature>
<feature type="mutagenesis site" description="Disrupts hemoglobin binding." evidence="11 12">
    <original>R</original>
    <variation>A</variation>
    <location>
        <position position="196"/>
    </location>
</feature>
<feature type="mutagenesis site" description="Disrupts hemoglobin binding." evidence="10 11 12">
    <original>Y</original>
    <variation>A</variation>
    <location>
        <position position="197"/>
    </location>
</feature>
<feature type="mutagenesis site" description="73-fold decrease in affinity for hemoglobin." evidence="12">
    <original>Q</original>
    <variation>A</variation>
    <location>
        <position position="209"/>
    </location>
</feature>
<feature type="mutagenesis site" description="360-fold decrease in affinity for hemoglobin." evidence="12">
    <original>I</original>
    <variation>A</variation>
    <location>
        <position position="224"/>
    </location>
</feature>
<feature type="mutagenesis site" description="Disrupts hemoglobin binding." evidence="12">
    <original>S</original>
    <variation>A</variation>
    <location>
        <position position="225"/>
    </location>
</feature>
<feature type="mutagenesis site" description="Disrupts hemoglobin binding." evidence="12">
    <original>M</original>
    <variation>A</variation>
    <location>
        <position position="238"/>
    </location>
</feature>
<feature type="strand" evidence="23">
    <location>
        <begin position="183"/>
        <end position="185"/>
    </location>
</feature>
<feature type="strand" evidence="23">
    <location>
        <begin position="188"/>
        <end position="191"/>
    </location>
</feature>
<feature type="helix" evidence="23">
    <location>
        <begin position="201"/>
        <end position="208"/>
    </location>
</feature>
<feature type="strand" evidence="23">
    <location>
        <begin position="210"/>
        <end position="215"/>
    </location>
</feature>
<feature type="strand" evidence="23">
    <location>
        <begin position="218"/>
        <end position="222"/>
    </location>
</feature>
<feature type="strand" evidence="23">
    <location>
        <begin position="231"/>
        <end position="237"/>
    </location>
</feature>
<feature type="strand" evidence="23">
    <location>
        <begin position="240"/>
        <end position="244"/>
    </location>
</feature>
<feature type="strand" evidence="23">
    <location>
        <begin position="250"/>
        <end position="262"/>
    </location>
</feature>
<feature type="strand" evidence="23">
    <location>
        <begin position="265"/>
        <end position="272"/>
    </location>
</feature>
<feature type="strand" evidence="23">
    <location>
        <begin position="275"/>
        <end position="282"/>
    </location>
</feature>
<protein>
    <recommendedName>
        <fullName evidence="13">Streptococcal hemoprotein receptor</fullName>
    </recommendedName>
    <alternativeName>
        <fullName evidence="14">Heme-acquisition protein Shr</fullName>
    </alternativeName>
    <alternativeName>
        <fullName evidence="18">Heme-binding protein Shr</fullName>
    </alternativeName>
    <alternativeName>
        <fullName evidence="13">Hemoprotein binding receptor</fullName>
    </alternativeName>
</protein>
<accession>Q99YA0</accession>
<accession>B0LFQ8</accession>
<accession>Q48WX7</accession>
<name>SHR_STRP1</name>
<organism>
    <name type="scientific">Streptococcus pyogenes serotype M1</name>
    <dbReference type="NCBI Taxonomy" id="301447"/>
    <lineage>
        <taxon>Bacteria</taxon>
        <taxon>Bacillati</taxon>
        <taxon>Bacillota</taxon>
        <taxon>Bacilli</taxon>
        <taxon>Lactobacillales</taxon>
        <taxon>Streptococcaceae</taxon>
        <taxon>Streptococcus</taxon>
    </lineage>
</organism>
<proteinExistence type="evidence at protein level"/>
<sequence>MKKISKCAFVAISALVLIQATQTVKSQEPLVQSQLVTTVALTQDNRLLVEEIGPYASQSAGKEYYKHIEKIIVDNDVYEKSLEGERTFDINYQGIKINADLIKDGKHELTIVNKKDGDILITFIKKGDKVTFISAQKLGTTDHQDSLKKDVLSDKTVPQNQGTQKVVKSGKNTANLSLITKLSQEDGAILFPEIDRYSDNKQIKALTQQITKVTVNGTVYKDLISDSVKDTNGWVSNMTGLHLGTKAFKDGENTIVISSKGFEDVTITVTKKDGQIHFVSAKQKQHVTAEDRQSTKLDVTTLEKAIKEADAIIAKESNKDAVKDLAEKLQVIKDSYKEIKDSKLLADTHRLLKDTIESYQAGEVSINNLTEGTYTLNFKANKENSEESSMLQGAFDKRAKLVVKADGTMEISMLNTALGQFLIDFSIESKGTYPAAVRKQVGQKDINGSYIRSEFTMPIDDLDKLHKGAVLVSAMGGQESDLNHYDKYTKLDMTFSKTVTKGWSGYQVETDDKEKGVGTERLEKVLVKLGKDLDGDGKLSKTELEQIRGELRLDHYELTDISLLKHAKNITELHLDGNQITEIPKELFSQMKQLRFLNLRSNHLTYLDKDTFKSNAQLRELYLSSNFIHSLEGGLFQSLHHLEQLDLSKNRIGRLCDNPFEGLSRLTSLGFAENSLEEIPEKALEPLTSLNFIDLSQNNLALLPKTIEKLRALSTIVASRNHITRIDNISFKNLPKLSVLDLSTNEISNLPNGIFKQNNQLTKLDFFNNLLTQVEESVFPDVETLNLDVKFNQIKSVSPKVRALIGQHKLTPQKHIAKLEASLDGEKIKYHQAFSLLDLYYWEQKTNSAIDKELVSVEEYQQLLQEKGSDTVSLLNDMQVDWSIVIQLQKKASNGQYVTVDEKLLSNDPKDDLTGEFSLKDPGTYRIRKALITKKFATQKEHIYLTSNDILVAKGPHSHQKDLVENGLRALNQKQLRDGIYYLNASMLKTDLASESMSNKAINHRVTLVVKKGVSYLEVEFRGIKVGKMLGYLGELSYFVDGYQRDLAGKPVGRTKKAEVVSYFTDVTGLPLADRYGKNYPKVLRMKLIEQAKKDGLVPLQVFVPIMDAISKGSGLQTVFMRLDWASLTTEKAKVVKETNNPQENSHLTSTDQLKGPQNRQQEKTPTSPPSAATGIANLTDLLAKKATGQSTQETSKTDDTDKAEKLKQLVRDHQTSIEGKTAKDTKTKKSDKKHRSNQQSNGEESSSRYHLIAGLSSFMIVALGFIIGRKTLFK</sequence>
<keyword id="KW-0002">3D-structure</keyword>
<keyword id="KW-1003">Cell membrane</keyword>
<keyword id="KW-0349">Heme</keyword>
<keyword id="KW-0408">Iron</keyword>
<keyword id="KW-0433">Leucine-rich repeat</keyword>
<keyword id="KW-0472">Membrane</keyword>
<keyword id="KW-0479">Metal-binding</keyword>
<keyword id="KW-1185">Reference proteome</keyword>
<keyword id="KW-0677">Repeat</keyword>
<keyword id="KW-0732">Signal</keyword>
<keyword id="KW-0812">Transmembrane</keyword>
<keyword id="KW-1133">Transmembrane helix</keyword>
<keyword id="KW-0843">Virulence</keyword>
<dbReference type="EMBL" id="EU098089">
    <property type="protein sequence ID" value="ABW80932.1"/>
    <property type="molecule type" value="Genomic_DNA"/>
</dbReference>
<dbReference type="EMBL" id="AE004092">
    <property type="protein sequence ID" value="AAK34530.1"/>
    <property type="molecule type" value="Genomic_DNA"/>
</dbReference>
<dbReference type="RefSeq" id="NP_269809.1">
    <property type="nucleotide sequence ID" value="NC_002737.2"/>
</dbReference>
<dbReference type="PDB" id="6DKQ">
    <property type="method" value="X-ray"/>
    <property type="resolution" value="1.50 A"/>
    <property type="chains" value="A/B=175-285"/>
</dbReference>
<dbReference type="PDB" id="7CUD">
    <property type="method" value="X-ray"/>
    <property type="resolution" value="1.80 A"/>
    <property type="chains" value="A=171-294"/>
</dbReference>
<dbReference type="PDB" id="7CUE">
    <property type="method" value="X-ray"/>
    <property type="resolution" value="2.75 A"/>
    <property type="chains" value="E/F/H=171-294"/>
</dbReference>
<dbReference type="PDB" id="8DOV">
    <property type="method" value="X-ray"/>
    <property type="resolution" value="2.10 A"/>
    <property type="chains" value="I/J/K=175-285"/>
</dbReference>
<dbReference type="PDBsum" id="6DKQ"/>
<dbReference type="PDBsum" id="7CUD"/>
<dbReference type="PDBsum" id="7CUE"/>
<dbReference type="PDBsum" id="8DOV"/>
<dbReference type="SMR" id="Q99YA0"/>
<dbReference type="TCDB" id="8.A.43.1.1">
    <property type="family name" value="the neat-domain containing methaemoglobin heme sequestration (n-mhs) family"/>
</dbReference>
<dbReference type="PaxDb" id="1314-HKU360_01581"/>
<dbReference type="KEGG" id="spy:SPy_1798"/>
<dbReference type="PATRIC" id="fig|160490.10.peg.1565"/>
<dbReference type="HOGENOM" id="CLU_263313_0_0_9"/>
<dbReference type="OMA" id="GFQTVFM"/>
<dbReference type="Proteomes" id="UP000000750">
    <property type="component" value="Chromosome"/>
</dbReference>
<dbReference type="GO" id="GO:0005886">
    <property type="term" value="C:plasma membrane"/>
    <property type="evidence" value="ECO:0007669"/>
    <property type="project" value="UniProtKB-SubCell"/>
</dbReference>
<dbReference type="GO" id="GO:0046872">
    <property type="term" value="F:metal ion binding"/>
    <property type="evidence" value="ECO:0007669"/>
    <property type="project" value="UniProtKB-KW"/>
</dbReference>
<dbReference type="CDD" id="cd06920">
    <property type="entry name" value="NEAT"/>
    <property type="match status" value="2"/>
</dbReference>
<dbReference type="FunFam" id="3.80.10.10:FF:001164">
    <property type="entry name" value="GH01279p"/>
    <property type="match status" value="1"/>
</dbReference>
<dbReference type="Gene3D" id="2.60.40.1850">
    <property type="match status" value="2"/>
</dbReference>
<dbReference type="Gene3D" id="3.80.10.10">
    <property type="entry name" value="Ribonuclease Inhibitor"/>
    <property type="match status" value="1"/>
</dbReference>
<dbReference type="InterPro" id="IPR018247">
    <property type="entry name" value="EF_Hand_1_Ca_BS"/>
</dbReference>
<dbReference type="InterPro" id="IPR001611">
    <property type="entry name" value="Leu-rich_rpt"/>
</dbReference>
<dbReference type="InterPro" id="IPR003591">
    <property type="entry name" value="Leu-rich_rpt_typical-subtyp"/>
</dbReference>
<dbReference type="InterPro" id="IPR032675">
    <property type="entry name" value="LRR_dom_sf"/>
</dbReference>
<dbReference type="InterPro" id="IPR006635">
    <property type="entry name" value="NEAT_dom"/>
</dbReference>
<dbReference type="InterPro" id="IPR037250">
    <property type="entry name" value="NEAT_dom_sf"/>
</dbReference>
<dbReference type="InterPro" id="IPR011432">
    <property type="entry name" value="Shr-like_HID"/>
</dbReference>
<dbReference type="InterPro" id="IPR050333">
    <property type="entry name" value="SLRP"/>
</dbReference>
<dbReference type="PANTHER" id="PTHR45712">
    <property type="entry name" value="AGAP008170-PA"/>
    <property type="match status" value="1"/>
</dbReference>
<dbReference type="PANTHER" id="PTHR45712:SF22">
    <property type="entry name" value="INSULIN-LIKE GROWTH FACTOR-BINDING PROTEIN COMPLEX ACID LABILE SUBUNIT"/>
    <property type="match status" value="1"/>
</dbReference>
<dbReference type="Pfam" id="PF13855">
    <property type="entry name" value="LRR_8"/>
    <property type="match status" value="3"/>
</dbReference>
<dbReference type="Pfam" id="PF05031">
    <property type="entry name" value="NEAT"/>
    <property type="match status" value="1"/>
</dbReference>
<dbReference type="Pfam" id="PF07550">
    <property type="entry name" value="Shr-like_HID"/>
    <property type="match status" value="1"/>
</dbReference>
<dbReference type="SMART" id="SM00365">
    <property type="entry name" value="LRR_SD22"/>
    <property type="match status" value="5"/>
</dbReference>
<dbReference type="SMART" id="SM00369">
    <property type="entry name" value="LRR_TYP"/>
    <property type="match status" value="9"/>
</dbReference>
<dbReference type="SMART" id="SM00725">
    <property type="entry name" value="NEAT"/>
    <property type="match status" value="2"/>
</dbReference>
<dbReference type="SUPFAM" id="SSF52058">
    <property type="entry name" value="L domain-like"/>
    <property type="match status" value="1"/>
</dbReference>
<dbReference type="SUPFAM" id="SSF158911">
    <property type="entry name" value="NEAT domain-like"/>
    <property type="match status" value="1"/>
</dbReference>
<dbReference type="PROSITE" id="PS00018">
    <property type="entry name" value="EF_HAND_1"/>
    <property type="match status" value="1"/>
</dbReference>
<dbReference type="PROSITE" id="PS51450">
    <property type="entry name" value="LRR"/>
    <property type="match status" value="4"/>
</dbReference>
<dbReference type="PROSITE" id="PS50978">
    <property type="entry name" value="NEAT"/>
    <property type="match status" value="2"/>
</dbReference>
<reference evidence="18" key="1">
    <citation type="journal article" date="2008" name="BMC Microbiol.">
        <title>The surface protein Shr of Streptococcus pyogenes binds heme and transfers it to the streptococcal heme-binding protein Shp.</title>
        <authorList>
            <person name="Zhu H."/>
            <person name="Liu M."/>
            <person name="Lei B."/>
        </authorList>
    </citation>
    <scope>NUCLEOTIDE SEQUENCE [GENOMIC DNA]</scope>
    <scope>FUNCTION AS A RECEPTOR</scope>
    <scope>HEME-BINDING</scope>
    <source>
        <strain>ATCC BAA-947 / MGAS5005 / Serotype M1</strain>
    </source>
</reference>
<reference evidence="17" key="2">
    <citation type="journal article" date="2001" name="Proc. Natl. Acad. Sci. U.S.A.">
        <title>Complete genome sequence of an M1 strain of Streptococcus pyogenes.</title>
        <authorList>
            <person name="Ferretti J.J."/>
            <person name="McShan W.M."/>
            <person name="Ajdic D.J."/>
            <person name="Savic D.J."/>
            <person name="Savic G."/>
            <person name="Lyon K."/>
            <person name="Primeaux C."/>
            <person name="Sezate S."/>
            <person name="Suvorov A.N."/>
            <person name="Kenton S."/>
            <person name="Lai H.S."/>
            <person name="Lin S.P."/>
            <person name="Qian Y."/>
            <person name="Jia H.G."/>
            <person name="Najar F.Z."/>
            <person name="Ren Q."/>
            <person name="Zhu H."/>
            <person name="Song L."/>
            <person name="White J."/>
            <person name="Yuan X."/>
            <person name="Clifton S.W."/>
            <person name="Roe B.A."/>
            <person name="McLaughlin R.E."/>
        </authorList>
    </citation>
    <scope>NUCLEOTIDE SEQUENCE [LARGE SCALE GENOMIC DNA]</scope>
    <source>
        <strain>ATCC 700294 / SF370 / Serotype M1</strain>
    </source>
</reference>
<reference key="3">
    <citation type="journal article" date="2003" name="Infect. Immun.">
        <title>Identification and characterization of a Streptococcus pyogenes operon involved in binding of hemoproteins and acquisition of iron.</title>
        <authorList>
            <person name="Bates C.S."/>
            <person name="Montanez G.E."/>
            <person name="Woods C.R."/>
            <person name="Vincent R.M."/>
            <person name="Eichenbaum Z."/>
        </authorList>
    </citation>
    <scope>FUNCTION AS A RECEPTOR</scope>
    <scope>SUBCELLULAR LOCATION</scope>
    <scope>INDUCTION</scope>
    <scope>DISRUPTION PHENOTYPE</scope>
    <source>
        <strain>ATCC 700294 / SF370 / Serotype M1</strain>
    </source>
</reference>
<reference key="4">
    <citation type="journal article" date="2008" name="Infect. Immun.">
        <title>Shr is a broad-spectrum surface receptor that contributes to adherence and virulence in group A streptococcus.</title>
        <authorList>
            <person name="Fisher M."/>
            <person name="Huang Y.S."/>
            <person name="Li X."/>
            <person name="McIver K.S."/>
            <person name="Toukoki C."/>
            <person name="Eichenbaum Z."/>
        </authorList>
    </citation>
    <scope>FUNCTION AS AN ADHESIN</scope>
    <scope>SUBCELLULAR LOCATION</scope>
    <scope>EXPRESSION DURING INFECTION</scope>
    <scope>DISRUPTION PHENOTYPE</scope>
    <source>
        <strain>ATCC BAA-947 / MGAS5005 / Serotype M1</strain>
        <strain>JRS6 / Serotype M6</strain>
        <strain>NZ131 / Serotype M49</strain>
    </source>
</reference>
<reference key="5">
    <citation type="journal article" date="2010" name="Mol. Microbiol.">
        <title>Shr of group A streptococcus is a new type of composite NEAT protein involved in sequestering haem from methaemoglobin.</title>
        <authorList>
            <person name="Ouattara M."/>
            <person name="Cunha E.B."/>
            <person name="Li X."/>
            <person name="Huang Y.S."/>
            <person name="Dixon D."/>
            <person name="Eichenbaum Z."/>
        </authorList>
    </citation>
    <scope>FUNCTION</scope>
    <scope>DOMAIN</scope>
    <scope>DISRUPTION PHENOTYPE</scope>
    <source>
        <strain>NZ131 / Serotype M49</strain>
    </source>
</reference>
<reference key="6">
    <citation type="journal article" date="2012" name="Virulence">
        <title>Study of streptococcal hemoprotein receptor (Shr) in iron acquisition and virulence of M1T1 group A streptococcus.</title>
        <authorList>
            <person name="Dahesh S."/>
            <person name="Nizet V."/>
            <person name="Cole J.N."/>
        </authorList>
    </citation>
    <scope>FUNCTION</scope>
    <scope>DISRUPTION PHENOTYPE</scope>
    <source>
        <strain>5448 / Serotype M1T1</strain>
    </source>
</reference>
<reference key="7">
    <citation type="journal article" date="2013" name="Arch. Biochem. Biophys.">
        <title>Kinetics of heme transfer by the Shr NEAT domains of Group A Streptococcus.</title>
        <authorList>
            <person name="Ouattara M."/>
            <person name="Pennati A."/>
            <person name="Devlin D.J."/>
            <person name="Huang Y.S."/>
            <person name="Gadda G."/>
            <person name="Eichenbaum Z."/>
        </authorList>
    </citation>
    <scope>FUNCTION</scope>
    <scope>ACTIVITY REGULATION</scope>
    <scope>DOMAIN</scope>
</reference>
<reference evidence="19" key="8">
    <citation type="journal article" date="2018" name="J. Biol. Chem.">
        <title>The Streptococcus pyogenes Shr protein captures human hemoglobin using two structurally unique binding domains.</title>
        <authorList>
            <person name="Macdonald R."/>
            <person name="Cascio D."/>
            <person name="Collazo M.J."/>
            <person name="Phillips M."/>
            <person name="Clubb R.T."/>
        </authorList>
    </citation>
    <scope>X-RAY CRYSTALLOGRAPHY (1.50 ANGSTROMS) OF 175-285</scope>
    <scope>FUNCTION</scope>
    <scope>DOMAIN</scope>
    <scope>MUTAGENESIS OF TYR-55 AND TYR-197</scope>
</reference>
<reference evidence="22" key="9">
    <citation type="journal article" date="2023" name="Proc. Natl. Acad. Sci. U.S.A.">
        <title>The Shr receptor from Streptococcus pyogenes uses a cap and release mechanism to acquire heme-iron from human hemoglobin.</title>
        <authorList>
            <person name="Macdonald R."/>
            <person name="Mahoney B.J."/>
            <person name="Soule J."/>
            <person name="Goring A.K."/>
            <person name="Ford J."/>
            <person name="Loo J.A."/>
            <person name="Cascio D."/>
            <person name="Clubb R.T."/>
        </authorList>
    </citation>
    <scope>X-RAY CRYSTALLOGRAPHY (2.10 ANGSTROMS) OF 175-285 IN COMPLEX WITH METHEMOGLOBIN</scope>
    <scope>FUNCTION</scope>
    <scope>DOMAIN</scope>
    <scope>MUTAGENESIS OF ARG-196 AND TYR-197</scope>
    <source>
        <strain>ATCC BAA-947 / MGAS5005 / Serotype M1</strain>
    </source>
</reference>
<reference evidence="20 21" key="10">
    <citation type="journal article" date="2024" name="Sci. Rep.">
        <title>Structural basis for the recognition of human hemoglobin by the heme-acquisition protein Shr from Streptococcus pyogenes.</title>
        <authorList>
            <person name="Senoo A."/>
            <person name="Hoshino M."/>
            <person name="Shiomi T."/>
            <person name="Nakakido M."/>
            <person name="Nagatoishi S."/>
            <person name="Kuroda D."/>
            <person name="Nakagawa I."/>
            <person name="Tame J.R.H."/>
            <person name="Caaveiro J.M.M."/>
            <person name="Tsumoto K."/>
        </authorList>
    </citation>
    <scope>X-RAY CRYSTALLOGRAPHY (1.80 ANGSTROMS) OF 171-294 IN COMPLEX WITH HEMOGLOBIN</scope>
    <scope>DOMAIN</scope>
    <scope>BIOTECHNOLOGY</scope>
    <scope>MUTAGENESIS OF ARG-196; TYR-197; GLN-209; ILE-224; SER-225 AND MET-238</scope>
</reference>